<gene>
    <name type="primary">Sarg</name>
</gene>
<evidence type="ECO:0000250" key="1"/>
<evidence type="ECO:0000250" key="2">
    <source>
        <dbReference type="UniProtKB" id="Q8BI29"/>
    </source>
</evidence>
<evidence type="ECO:0000250" key="3">
    <source>
        <dbReference type="UniProtKB" id="Q9BW04"/>
    </source>
</evidence>
<evidence type="ECO:0000256" key="4">
    <source>
        <dbReference type="SAM" id="MobiDB-lite"/>
    </source>
</evidence>
<evidence type="ECO:0000305" key="5"/>
<evidence type="ECO:0007744" key="6">
    <source>
    </source>
</evidence>
<sequence>MPKRELWPAGSCSEPVTHIGSCGSMMSTTSTHSGSSDSSYDFLSAEEKECLLFLEKTIGSLEAEADSGLSTDESEPATSPQSFRALPTTTQRAPQGKPEARDTQQVPVPVPKRAAQSSGPPESPSPGLRSGSYSLPRNLHLGRSQNLRKSATQTNSVSEAPEVFLEEPKKGQTRQGAKTIQPPAPSQEGTPDLNTVLIPPPEAFQDITSKKAEGESPPKKPGEQTHRPQGHILERSPHSQKKADMSSETMTHKATEKGWTEGPQRPQQPPTQPSQNTQAEEPSLPSGVKPNIQQSLLTATKPRRLPPNIVLKSSRSSFHSHPQNWLSNHTEATDSGPVSSLQEQRKARREALEKLGLPQDQDDPSLPVNKHTGSFKVKEAQAQTSSQARAPAQPASPALVRGTASVAEKASSVKAITPLDSLSKGWIPAQETPPGKVGAAKSMPIPIPKASKENSSLTQSKPDPRLTLQESSIPGLRQMNFKSNTLERSGVGLSSYLSAAEKDPGGQTSTSLGKSPFLDKVSSSVFRNSRPRPASLGMGKDFAGIQGGKLVGLEQGQCSQQPSFKGQSHDKLPRPPCVSVKISPKGIPDGHRREALKKLGLLKE</sequence>
<feature type="chain" id="PRO_0000318577" description="Specifically androgen-regulated gene protein">
    <location>
        <begin position="1"/>
        <end position="604"/>
    </location>
</feature>
<feature type="region of interest" description="Disordered" evidence="4">
    <location>
        <begin position="20"/>
        <end position="41"/>
    </location>
</feature>
<feature type="region of interest" description="Disordered" evidence="4">
    <location>
        <begin position="64"/>
        <end position="411"/>
    </location>
</feature>
<feature type="region of interest" description="Disordered" evidence="4">
    <location>
        <begin position="424"/>
        <end position="484"/>
    </location>
</feature>
<feature type="region of interest" description="Disordered" evidence="4">
    <location>
        <begin position="497"/>
        <end position="541"/>
    </location>
</feature>
<feature type="region of interest" description="Disordered" evidence="4">
    <location>
        <begin position="553"/>
        <end position="592"/>
    </location>
</feature>
<feature type="compositionally biased region" description="Low complexity" evidence="4">
    <location>
        <begin position="20"/>
        <end position="39"/>
    </location>
</feature>
<feature type="compositionally biased region" description="Polar residues" evidence="4">
    <location>
        <begin position="68"/>
        <end position="93"/>
    </location>
</feature>
<feature type="compositionally biased region" description="Low complexity" evidence="4">
    <location>
        <begin position="117"/>
        <end position="132"/>
    </location>
</feature>
<feature type="compositionally biased region" description="Polar residues" evidence="4">
    <location>
        <begin position="143"/>
        <end position="158"/>
    </location>
</feature>
<feature type="compositionally biased region" description="Basic and acidic residues" evidence="4">
    <location>
        <begin position="208"/>
        <end position="259"/>
    </location>
</feature>
<feature type="compositionally biased region" description="Polar residues" evidence="4">
    <location>
        <begin position="311"/>
        <end position="330"/>
    </location>
</feature>
<feature type="compositionally biased region" description="Basic and acidic residues" evidence="4">
    <location>
        <begin position="343"/>
        <end position="353"/>
    </location>
</feature>
<feature type="compositionally biased region" description="Low complexity" evidence="4">
    <location>
        <begin position="380"/>
        <end position="411"/>
    </location>
</feature>
<feature type="compositionally biased region" description="Polar residues" evidence="4">
    <location>
        <begin position="556"/>
        <end position="566"/>
    </location>
</feature>
<feature type="modified residue" description="Phosphoserine" evidence="3">
    <location>
        <position position="132"/>
    </location>
</feature>
<feature type="modified residue" description="Phosphoserine" evidence="3">
    <location>
        <position position="134"/>
    </location>
</feature>
<feature type="modified residue" description="Phosphothreonine" evidence="2">
    <location>
        <position position="333"/>
    </location>
</feature>
<feature type="modified residue" description="Phosphoserine" evidence="6">
    <location>
        <position position="396"/>
    </location>
</feature>
<feature type="modified residue" description="Phosphoserine" evidence="2">
    <location>
        <position position="411"/>
    </location>
</feature>
<feature type="modified residue" description="Phosphoserine" evidence="3">
    <location>
        <position position="522"/>
    </location>
</feature>
<comment type="function">
    <text evidence="1">Putative androgen-specific receptor.</text>
</comment>
<comment type="subcellular location">
    <subcellularLocation>
        <location evidence="1">Cytoplasm</location>
    </subcellularLocation>
</comment>
<comment type="similarity">
    <text evidence="5">Belongs to the SARG family.</text>
</comment>
<name>SARG_RAT</name>
<keyword id="KW-0963">Cytoplasm</keyword>
<keyword id="KW-0597">Phosphoprotein</keyword>
<keyword id="KW-0675">Receptor</keyword>
<keyword id="KW-1185">Reference proteome</keyword>
<proteinExistence type="evidence at protein level"/>
<reference key="1">
    <citation type="journal article" date="2004" name="Nature">
        <title>Genome sequence of the Brown Norway rat yields insights into mammalian evolution.</title>
        <authorList>
            <person name="Gibbs R.A."/>
            <person name="Weinstock G.M."/>
            <person name="Metzker M.L."/>
            <person name="Muzny D.M."/>
            <person name="Sodergren E.J."/>
            <person name="Scherer S."/>
            <person name="Scott G."/>
            <person name="Steffen D."/>
            <person name="Worley K.C."/>
            <person name="Burch P.E."/>
            <person name="Okwuonu G."/>
            <person name="Hines S."/>
            <person name="Lewis L."/>
            <person name="Deramo C."/>
            <person name="Delgado O."/>
            <person name="Dugan-Rocha S."/>
            <person name="Miner G."/>
            <person name="Morgan M."/>
            <person name="Hawes A."/>
            <person name="Gill R."/>
            <person name="Holt R.A."/>
            <person name="Adams M.D."/>
            <person name="Amanatides P.G."/>
            <person name="Baden-Tillson H."/>
            <person name="Barnstead M."/>
            <person name="Chin S."/>
            <person name="Evans C.A."/>
            <person name="Ferriera S."/>
            <person name="Fosler C."/>
            <person name="Glodek A."/>
            <person name="Gu Z."/>
            <person name="Jennings D."/>
            <person name="Kraft C.L."/>
            <person name="Nguyen T."/>
            <person name="Pfannkoch C.M."/>
            <person name="Sitter C."/>
            <person name="Sutton G.G."/>
            <person name="Venter J.C."/>
            <person name="Woodage T."/>
            <person name="Smith D."/>
            <person name="Lee H.-M."/>
            <person name="Gustafson E."/>
            <person name="Cahill P."/>
            <person name="Kana A."/>
            <person name="Doucette-Stamm L."/>
            <person name="Weinstock K."/>
            <person name="Fechtel K."/>
            <person name="Weiss R.B."/>
            <person name="Dunn D.M."/>
            <person name="Green E.D."/>
            <person name="Blakesley R.W."/>
            <person name="Bouffard G.G."/>
            <person name="De Jong P.J."/>
            <person name="Osoegawa K."/>
            <person name="Zhu B."/>
            <person name="Marra M."/>
            <person name="Schein J."/>
            <person name="Bosdet I."/>
            <person name="Fjell C."/>
            <person name="Jones S."/>
            <person name="Krzywinski M."/>
            <person name="Mathewson C."/>
            <person name="Siddiqui A."/>
            <person name="Wye N."/>
            <person name="McPherson J."/>
            <person name="Zhao S."/>
            <person name="Fraser C.M."/>
            <person name="Shetty J."/>
            <person name="Shatsman S."/>
            <person name="Geer K."/>
            <person name="Chen Y."/>
            <person name="Abramzon S."/>
            <person name="Nierman W.C."/>
            <person name="Havlak P.H."/>
            <person name="Chen R."/>
            <person name="Durbin K.J."/>
            <person name="Egan A."/>
            <person name="Ren Y."/>
            <person name="Song X.-Z."/>
            <person name="Li B."/>
            <person name="Liu Y."/>
            <person name="Qin X."/>
            <person name="Cawley S."/>
            <person name="Cooney A.J."/>
            <person name="D'Souza L.M."/>
            <person name="Martin K."/>
            <person name="Wu J.Q."/>
            <person name="Gonzalez-Garay M.L."/>
            <person name="Jackson A.R."/>
            <person name="Kalafus K.J."/>
            <person name="McLeod M.P."/>
            <person name="Milosavljevic A."/>
            <person name="Virk D."/>
            <person name="Volkov A."/>
            <person name="Wheeler D.A."/>
            <person name="Zhang Z."/>
            <person name="Bailey J.A."/>
            <person name="Eichler E.E."/>
            <person name="Tuzun E."/>
            <person name="Birney E."/>
            <person name="Mongin E."/>
            <person name="Ureta-Vidal A."/>
            <person name="Woodwark C."/>
            <person name="Zdobnov E."/>
            <person name="Bork P."/>
            <person name="Suyama M."/>
            <person name="Torrents D."/>
            <person name="Alexandersson M."/>
            <person name="Trask B.J."/>
            <person name="Young J.M."/>
            <person name="Huang H."/>
            <person name="Wang H."/>
            <person name="Xing H."/>
            <person name="Daniels S."/>
            <person name="Gietzen D."/>
            <person name="Schmidt J."/>
            <person name="Stevens K."/>
            <person name="Vitt U."/>
            <person name="Wingrove J."/>
            <person name="Camara F."/>
            <person name="Mar Alba M."/>
            <person name="Abril J.F."/>
            <person name="Guigo R."/>
            <person name="Smit A."/>
            <person name="Dubchak I."/>
            <person name="Rubin E.M."/>
            <person name="Couronne O."/>
            <person name="Poliakov A."/>
            <person name="Huebner N."/>
            <person name="Ganten D."/>
            <person name="Goesele C."/>
            <person name="Hummel O."/>
            <person name="Kreitler T."/>
            <person name="Lee Y.-A."/>
            <person name="Monti J."/>
            <person name="Schulz H."/>
            <person name="Zimdahl H."/>
            <person name="Himmelbauer H."/>
            <person name="Lehrach H."/>
            <person name="Jacob H.J."/>
            <person name="Bromberg S."/>
            <person name="Gullings-Handley J."/>
            <person name="Jensen-Seaman M.I."/>
            <person name="Kwitek A.E."/>
            <person name="Lazar J."/>
            <person name="Pasko D."/>
            <person name="Tonellato P.J."/>
            <person name="Twigger S."/>
            <person name="Ponting C.P."/>
            <person name="Duarte J.M."/>
            <person name="Rice S."/>
            <person name="Goodstadt L."/>
            <person name="Beatson S.A."/>
            <person name="Emes R.D."/>
            <person name="Winter E.E."/>
            <person name="Webber C."/>
            <person name="Brandt P."/>
            <person name="Nyakatura G."/>
            <person name="Adetobi M."/>
            <person name="Chiaromonte F."/>
            <person name="Elnitski L."/>
            <person name="Eswara P."/>
            <person name="Hardison R.C."/>
            <person name="Hou M."/>
            <person name="Kolbe D."/>
            <person name="Makova K."/>
            <person name="Miller W."/>
            <person name="Nekrutenko A."/>
            <person name="Riemer C."/>
            <person name="Schwartz S."/>
            <person name="Taylor J."/>
            <person name="Yang S."/>
            <person name="Zhang Y."/>
            <person name="Lindpaintner K."/>
            <person name="Andrews T.D."/>
            <person name="Caccamo M."/>
            <person name="Clamp M."/>
            <person name="Clarke L."/>
            <person name="Curwen V."/>
            <person name="Durbin R.M."/>
            <person name="Eyras E."/>
            <person name="Searle S.M."/>
            <person name="Cooper G.M."/>
            <person name="Batzoglou S."/>
            <person name="Brudno M."/>
            <person name="Sidow A."/>
            <person name="Stone E.A."/>
            <person name="Payseur B.A."/>
            <person name="Bourque G."/>
            <person name="Lopez-Otin C."/>
            <person name="Puente X.S."/>
            <person name="Chakrabarti K."/>
            <person name="Chatterji S."/>
            <person name="Dewey C."/>
            <person name="Pachter L."/>
            <person name="Bray N."/>
            <person name="Yap V.B."/>
            <person name="Caspi A."/>
            <person name="Tesler G."/>
            <person name="Pevzner P.A."/>
            <person name="Haussler D."/>
            <person name="Roskin K.M."/>
            <person name="Baertsch R."/>
            <person name="Clawson H."/>
            <person name="Furey T.S."/>
            <person name="Hinrichs A.S."/>
            <person name="Karolchik D."/>
            <person name="Kent W.J."/>
            <person name="Rosenbloom K.R."/>
            <person name="Trumbower H."/>
            <person name="Weirauch M."/>
            <person name="Cooper D.N."/>
            <person name="Stenson P.D."/>
            <person name="Ma B."/>
            <person name="Brent M."/>
            <person name="Arumugam M."/>
            <person name="Shteynberg D."/>
            <person name="Copley R.R."/>
            <person name="Taylor M.S."/>
            <person name="Riethman H."/>
            <person name="Mudunuri U."/>
            <person name="Peterson J."/>
            <person name="Guyer M."/>
            <person name="Felsenfeld A."/>
            <person name="Old S."/>
            <person name="Mockrin S."/>
            <person name="Collins F.S."/>
        </authorList>
    </citation>
    <scope>NUCLEOTIDE SEQUENCE [LARGE SCALE GENOMIC DNA]</scope>
    <source>
        <strain>Brown Norway</strain>
    </source>
</reference>
<reference key="2">
    <citation type="journal article" date="2004" name="Genome Res.">
        <title>The status, quality, and expansion of the NIH full-length cDNA project: the Mammalian Gene Collection (MGC).</title>
        <authorList>
            <consortium name="The MGC Project Team"/>
        </authorList>
    </citation>
    <scope>NUCLEOTIDE SEQUENCE [LARGE SCALE MRNA] OF 141-604</scope>
    <source>
        <tissue>Prostate</tissue>
    </source>
</reference>
<reference key="3">
    <citation type="journal article" date="2012" name="Nat. Commun.">
        <title>Quantitative maps of protein phosphorylation sites across 14 different rat organs and tissues.</title>
        <authorList>
            <person name="Lundby A."/>
            <person name="Secher A."/>
            <person name="Lage K."/>
            <person name="Nordsborg N.B."/>
            <person name="Dmytriyev A."/>
            <person name="Lundby C."/>
            <person name="Olsen J.V."/>
        </authorList>
    </citation>
    <scope>PHOSPHORYLATION [LARGE SCALE ANALYSIS] AT SER-396</scope>
    <scope>IDENTIFICATION BY MASS SPECTROMETRY [LARGE SCALE ANALYSIS]</scope>
</reference>
<accession>Q499V8</accession>
<organism>
    <name type="scientific">Rattus norvegicus</name>
    <name type="common">Rat</name>
    <dbReference type="NCBI Taxonomy" id="10116"/>
    <lineage>
        <taxon>Eukaryota</taxon>
        <taxon>Metazoa</taxon>
        <taxon>Chordata</taxon>
        <taxon>Craniata</taxon>
        <taxon>Vertebrata</taxon>
        <taxon>Euteleostomi</taxon>
        <taxon>Mammalia</taxon>
        <taxon>Eutheria</taxon>
        <taxon>Euarchontoglires</taxon>
        <taxon>Glires</taxon>
        <taxon>Rodentia</taxon>
        <taxon>Myomorpha</taxon>
        <taxon>Muroidea</taxon>
        <taxon>Muridae</taxon>
        <taxon>Murinae</taxon>
        <taxon>Rattus</taxon>
    </lineage>
</organism>
<protein>
    <recommendedName>
        <fullName>Specifically androgen-regulated gene protein</fullName>
    </recommendedName>
</protein>
<dbReference type="EMBL" id="AABR03084897">
    <property type="status" value="NOT_ANNOTATED_CDS"/>
    <property type="molecule type" value="Genomic_DNA"/>
</dbReference>
<dbReference type="EMBL" id="BC099745">
    <property type="protein sequence ID" value="AAH99745.1"/>
    <property type="molecule type" value="mRNA"/>
</dbReference>
<dbReference type="RefSeq" id="NP_001094258.1">
    <property type="nucleotide sequence ID" value="NM_001100788.1"/>
</dbReference>
<dbReference type="RefSeq" id="XP_006249776.1">
    <property type="nucleotide sequence ID" value="XM_006249714.3"/>
</dbReference>
<dbReference type="RefSeq" id="XP_008767710.1">
    <property type="nucleotide sequence ID" value="XM_008769488.2"/>
</dbReference>
<dbReference type="FunCoup" id="Q499V8">
    <property type="interactions" value="109"/>
</dbReference>
<dbReference type="STRING" id="10116.ENSRNOP00000005791"/>
<dbReference type="iPTMnet" id="Q499V8"/>
<dbReference type="PhosphoSitePlus" id="Q499V8"/>
<dbReference type="PaxDb" id="10116-ENSRNOP00000005791"/>
<dbReference type="Ensembl" id="ENSRNOT00000005791.5">
    <property type="protein sequence ID" value="ENSRNOP00000005791.3"/>
    <property type="gene ID" value="ENSRNOG00000004341.5"/>
</dbReference>
<dbReference type="GeneID" id="498222"/>
<dbReference type="KEGG" id="rno:498222"/>
<dbReference type="AGR" id="RGD:1565034"/>
<dbReference type="CTD" id="498222"/>
<dbReference type="RGD" id="1565034">
    <property type="gene designation" value="C13h1orf116"/>
</dbReference>
<dbReference type="eggNOG" id="ENOG502RGW5">
    <property type="taxonomic scope" value="Eukaryota"/>
</dbReference>
<dbReference type="GeneTree" id="ENSGT00390000017874"/>
<dbReference type="HOGENOM" id="CLU_035136_0_0_1"/>
<dbReference type="InParanoid" id="Q499V8"/>
<dbReference type="OMA" id="HSEPQSW"/>
<dbReference type="OrthoDB" id="79793at9989"/>
<dbReference type="PhylomeDB" id="Q499V8"/>
<dbReference type="TreeFam" id="TF336615"/>
<dbReference type="PRO" id="PR:Q499V8"/>
<dbReference type="Proteomes" id="UP000002494">
    <property type="component" value="Chromosome 13"/>
</dbReference>
<dbReference type="Bgee" id="ENSRNOG00000004341">
    <property type="expression patterns" value="Expressed in stomach and 12 other cell types or tissues"/>
</dbReference>
<dbReference type="GO" id="GO:0005737">
    <property type="term" value="C:cytoplasm"/>
    <property type="evidence" value="ECO:0000266"/>
    <property type="project" value="RGD"/>
</dbReference>
<dbReference type="InterPro" id="IPR026152">
    <property type="entry name" value="SARG"/>
</dbReference>
<dbReference type="PANTHER" id="PTHR21555">
    <property type="entry name" value="SPECIFICALLY ANDROGEN-REGULATED GENE PROTEIN"/>
    <property type="match status" value="1"/>
</dbReference>
<dbReference type="PANTHER" id="PTHR21555:SF0">
    <property type="entry name" value="SPECIFICALLY ANDROGEN-REGULATED GENE PROTEIN"/>
    <property type="match status" value="1"/>
</dbReference>
<dbReference type="Pfam" id="PF15385">
    <property type="entry name" value="SARG"/>
    <property type="match status" value="1"/>
</dbReference>